<comment type="function">
    <text evidence="1">Forms part of the ribosomal stalk which helps the ribosome interact with GTP-bound translation factors. Is thus essential for accurate translation.</text>
</comment>
<comment type="subunit">
    <text evidence="1">Homodimer. Part of the ribosomal stalk of the 50S ribosomal subunit. Forms a multimeric L10(L12)X complex, where L10 forms an elongated spine to which 2 to 4 L12 dimers bind in a sequential fashion. Binds GTP-bound translation factors.</text>
</comment>
<comment type="similarity">
    <text evidence="1">Belongs to the bacterial ribosomal protein bL12 family.</text>
</comment>
<feature type="chain" id="PRO_1000121444" description="Large ribosomal subunit protein bL12">
    <location>
        <begin position="1"/>
        <end position="125"/>
    </location>
</feature>
<evidence type="ECO:0000255" key="1">
    <source>
        <dbReference type="HAMAP-Rule" id="MF_00368"/>
    </source>
</evidence>
<evidence type="ECO:0000305" key="2"/>
<reference key="1">
    <citation type="journal article" date="2008" name="J. Bacteriol.">
        <title>The genome of Heliobacterium modesticaldum, a phototrophic representative of the Firmicutes containing the simplest photosynthetic apparatus.</title>
        <authorList>
            <person name="Sattley W.M."/>
            <person name="Madigan M.T."/>
            <person name="Swingley W.D."/>
            <person name="Cheung P.C."/>
            <person name="Clocksin K.M."/>
            <person name="Conrad A.L."/>
            <person name="Dejesa L.C."/>
            <person name="Honchak B.M."/>
            <person name="Jung D.O."/>
            <person name="Karbach L.E."/>
            <person name="Kurdoglu A."/>
            <person name="Lahiri S."/>
            <person name="Mastrian S.D."/>
            <person name="Page L.E."/>
            <person name="Taylor H.L."/>
            <person name="Wang Z.T."/>
            <person name="Raymond J."/>
            <person name="Chen M."/>
            <person name="Blankenship R.E."/>
            <person name="Touchman J.W."/>
        </authorList>
    </citation>
    <scope>NUCLEOTIDE SEQUENCE [LARGE SCALE GENOMIC DNA]</scope>
    <source>
        <strain>ATCC 51547 / Ice1</strain>
    </source>
</reference>
<protein>
    <recommendedName>
        <fullName evidence="1">Large ribosomal subunit protein bL12</fullName>
    </recommendedName>
    <alternativeName>
        <fullName evidence="2">50S ribosomal protein L7/L12</fullName>
    </alternativeName>
</protein>
<accession>B0TC46</accession>
<name>RL7_HELMI</name>
<dbReference type="EMBL" id="CP000930">
    <property type="protein sequence ID" value="ABZ83945.1"/>
    <property type="molecule type" value="Genomic_DNA"/>
</dbReference>
<dbReference type="RefSeq" id="WP_012282461.1">
    <property type="nucleotide sequence ID" value="NC_010337.2"/>
</dbReference>
<dbReference type="SMR" id="B0TC46"/>
<dbReference type="STRING" id="498761.HM1_1368"/>
<dbReference type="KEGG" id="hmo:HM1_1368"/>
<dbReference type="eggNOG" id="COG0222">
    <property type="taxonomic scope" value="Bacteria"/>
</dbReference>
<dbReference type="HOGENOM" id="CLU_086499_3_2_9"/>
<dbReference type="OrthoDB" id="9811748at2"/>
<dbReference type="Proteomes" id="UP000008550">
    <property type="component" value="Chromosome"/>
</dbReference>
<dbReference type="GO" id="GO:0022625">
    <property type="term" value="C:cytosolic large ribosomal subunit"/>
    <property type="evidence" value="ECO:0007669"/>
    <property type="project" value="TreeGrafter"/>
</dbReference>
<dbReference type="GO" id="GO:0003729">
    <property type="term" value="F:mRNA binding"/>
    <property type="evidence" value="ECO:0007669"/>
    <property type="project" value="TreeGrafter"/>
</dbReference>
<dbReference type="GO" id="GO:0003735">
    <property type="term" value="F:structural constituent of ribosome"/>
    <property type="evidence" value="ECO:0007669"/>
    <property type="project" value="InterPro"/>
</dbReference>
<dbReference type="GO" id="GO:0006412">
    <property type="term" value="P:translation"/>
    <property type="evidence" value="ECO:0007669"/>
    <property type="project" value="UniProtKB-UniRule"/>
</dbReference>
<dbReference type="CDD" id="cd00387">
    <property type="entry name" value="Ribosomal_L7_L12"/>
    <property type="match status" value="1"/>
</dbReference>
<dbReference type="FunFam" id="3.30.1390.10:FF:000001">
    <property type="entry name" value="50S ribosomal protein L7/L12"/>
    <property type="match status" value="1"/>
</dbReference>
<dbReference type="Gene3D" id="3.30.1390.10">
    <property type="match status" value="1"/>
</dbReference>
<dbReference type="Gene3D" id="1.20.5.710">
    <property type="entry name" value="Single helix bin"/>
    <property type="match status" value="1"/>
</dbReference>
<dbReference type="HAMAP" id="MF_00368">
    <property type="entry name" value="Ribosomal_bL12"/>
    <property type="match status" value="1"/>
</dbReference>
<dbReference type="InterPro" id="IPR000206">
    <property type="entry name" value="Ribosomal_bL12"/>
</dbReference>
<dbReference type="InterPro" id="IPR013823">
    <property type="entry name" value="Ribosomal_bL12_C"/>
</dbReference>
<dbReference type="InterPro" id="IPR014719">
    <property type="entry name" value="Ribosomal_bL12_C/ClpS-like"/>
</dbReference>
<dbReference type="InterPro" id="IPR008932">
    <property type="entry name" value="Ribosomal_bL12_oligo"/>
</dbReference>
<dbReference type="InterPro" id="IPR036235">
    <property type="entry name" value="Ribosomal_bL12_oligo_N_sf"/>
</dbReference>
<dbReference type="NCBIfam" id="TIGR00855">
    <property type="entry name" value="L12"/>
    <property type="match status" value="1"/>
</dbReference>
<dbReference type="PANTHER" id="PTHR45987">
    <property type="entry name" value="39S RIBOSOMAL PROTEIN L12"/>
    <property type="match status" value="1"/>
</dbReference>
<dbReference type="PANTHER" id="PTHR45987:SF4">
    <property type="entry name" value="LARGE RIBOSOMAL SUBUNIT PROTEIN BL12M"/>
    <property type="match status" value="1"/>
</dbReference>
<dbReference type="Pfam" id="PF00542">
    <property type="entry name" value="Ribosomal_L12"/>
    <property type="match status" value="1"/>
</dbReference>
<dbReference type="Pfam" id="PF16320">
    <property type="entry name" value="Ribosomal_L12_N"/>
    <property type="match status" value="1"/>
</dbReference>
<dbReference type="SUPFAM" id="SSF54736">
    <property type="entry name" value="ClpS-like"/>
    <property type="match status" value="1"/>
</dbReference>
<dbReference type="SUPFAM" id="SSF48300">
    <property type="entry name" value="Ribosomal protein L7/12, oligomerisation (N-terminal) domain"/>
    <property type="match status" value="1"/>
</dbReference>
<sequence>MSKINEIIEAVKGLTVLELAELVKAFEEEFGVSAAAPVAMAAMPVAAAAAAPAEEQTEFDVILKAAGDKKVNVIKVVREITGLGLKEAKDLVDGAPKPVKEKVSKEEAESIKKKLEESGATVEVK</sequence>
<organism>
    <name type="scientific">Heliobacterium modesticaldum (strain ATCC 51547 / Ice1)</name>
    <dbReference type="NCBI Taxonomy" id="498761"/>
    <lineage>
        <taxon>Bacteria</taxon>
        <taxon>Bacillati</taxon>
        <taxon>Bacillota</taxon>
        <taxon>Clostridia</taxon>
        <taxon>Eubacteriales</taxon>
        <taxon>Heliobacteriaceae</taxon>
        <taxon>Heliomicrobium</taxon>
    </lineage>
</organism>
<gene>
    <name evidence="1" type="primary">rplL</name>
    <name type="ordered locus">Helmi_13200</name>
    <name type="ORF">HM1_1368</name>
</gene>
<keyword id="KW-1185">Reference proteome</keyword>
<keyword id="KW-0687">Ribonucleoprotein</keyword>
<keyword id="KW-0689">Ribosomal protein</keyword>
<proteinExistence type="inferred from homology"/>